<proteinExistence type="inferred from homology"/>
<name>RL14_METS4</name>
<dbReference type="EMBL" id="CP000943">
    <property type="protein sequence ID" value="ACA14914.1"/>
    <property type="molecule type" value="Genomic_DNA"/>
</dbReference>
<dbReference type="RefSeq" id="WP_012330332.1">
    <property type="nucleotide sequence ID" value="NC_010511.1"/>
</dbReference>
<dbReference type="SMR" id="B0UHV9"/>
<dbReference type="STRING" id="426117.M446_0343"/>
<dbReference type="KEGG" id="met:M446_0343"/>
<dbReference type="eggNOG" id="COG0093">
    <property type="taxonomic scope" value="Bacteria"/>
</dbReference>
<dbReference type="HOGENOM" id="CLU_095071_2_1_5"/>
<dbReference type="GO" id="GO:0022625">
    <property type="term" value="C:cytosolic large ribosomal subunit"/>
    <property type="evidence" value="ECO:0007669"/>
    <property type="project" value="TreeGrafter"/>
</dbReference>
<dbReference type="GO" id="GO:0070180">
    <property type="term" value="F:large ribosomal subunit rRNA binding"/>
    <property type="evidence" value="ECO:0007669"/>
    <property type="project" value="TreeGrafter"/>
</dbReference>
<dbReference type="GO" id="GO:0003735">
    <property type="term" value="F:structural constituent of ribosome"/>
    <property type="evidence" value="ECO:0007669"/>
    <property type="project" value="InterPro"/>
</dbReference>
<dbReference type="GO" id="GO:0006412">
    <property type="term" value="P:translation"/>
    <property type="evidence" value="ECO:0007669"/>
    <property type="project" value="UniProtKB-UniRule"/>
</dbReference>
<dbReference type="CDD" id="cd00337">
    <property type="entry name" value="Ribosomal_uL14"/>
    <property type="match status" value="1"/>
</dbReference>
<dbReference type="FunFam" id="2.40.150.20:FF:000001">
    <property type="entry name" value="50S ribosomal protein L14"/>
    <property type="match status" value="1"/>
</dbReference>
<dbReference type="Gene3D" id="2.40.150.20">
    <property type="entry name" value="Ribosomal protein L14"/>
    <property type="match status" value="1"/>
</dbReference>
<dbReference type="HAMAP" id="MF_01367">
    <property type="entry name" value="Ribosomal_uL14"/>
    <property type="match status" value="1"/>
</dbReference>
<dbReference type="InterPro" id="IPR000218">
    <property type="entry name" value="Ribosomal_uL14"/>
</dbReference>
<dbReference type="InterPro" id="IPR005745">
    <property type="entry name" value="Ribosomal_uL14_bac-type"/>
</dbReference>
<dbReference type="InterPro" id="IPR019972">
    <property type="entry name" value="Ribosomal_uL14_CS"/>
</dbReference>
<dbReference type="InterPro" id="IPR036853">
    <property type="entry name" value="Ribosomal_uL14_sf"/>
</dbReference>
<dbReference type="NCBIfam" id="TIGR01067">
    <property type="entry name" value="rplN_bact"/>
    <property type="match status" value="1"/>
</dbReference>
<dbReference type="PANTHER" id="PTHR11761">
    <property type="entry name" value="50S/60S RIBOSOMAL PROTEIN L14/L23"/>
    <property type="match status" value="1"/>
</dbReference>
<dbReference type="PANTHER" id="PTHR11761:SF3">
    <property type="entry name" value="LARGE RIBOSOMAL SUBUNIT PROTEIN UL14M"/>
    <property type="match status" value="1"/>
</dbReference>
<dbReference type="Pfam" id="PF00238">
    <property type="entry name" value="Ribosomal_L14"/>
    <property type="match status" value="1"/>
</dbReference>
<dbReference type="SMART" id="SM01374">
    <property type="entry name" value="Ribosomal_L14"/>
    <property type="match status" value="1"/>
</dbReference>
<dbReference type="SUPFAM" id="SSF50193">
    <property type="entry name" value="Ribosomal protein L14"/>
    <property type="match status" value="1"/>
</dbReference>
<dbReference type="PROSITE" id="PS00049">
    <property type="entry name" value="RIBOSOMAL_L14"/>
    <property type="match status" value="1"/>
</dbReference>
<keyword id="KW-0687">Ribonucleoprotein</keyword>
<keyword id="KW-0689">Ribosomal protein</keyword>
<keyword id="KW-0694">RNA-binding</keyword>
<keyword id="KW-0699">rRNA-binding</keyword>
<feature type="chain" id="PRO_1000144298" description="Large ribosomal subunit protein uL14">
    <location>
        <begin position="1"/>
        <end position="122"/>
    </location>
</feature>
<accession>B0UHV9</accession>
<sequence length="122" mass="13443">MIQMQTNLDVADNSGARRVMCIKVLGGSKRKYAGVGDIIVVSVKEAIPRGRVKKGDVMKAVVVRTAKDVRRPDGSVIRFDRNAAVLINNQKEPIGTRIFGPVPRELRARNHMKIISLAPEVL</sequence>
<gene>
    <name evidence="1" type="primary">rplN</name>
    <name type="ordered locus">M446_0343</name>
</gene>
<evidence type="ECO:0000255" key="1">
    <source>
        <dbReference type="HAMAP-Rule" id="MF_01367"/>
    </source>
</evidence>
<evidence type="ECO:0000305" key="2"/>
<comment type="function">
    <text evidence="1">Binds to 23S rRNA. Forms part of two intersubunit bridges in the 70S ribosome.</text>
</comment>
<comment type="subunit">
    <text evidence="1">Part of the 50S ribosomal subunit. Forms a cluster with proteins L3 and L19. In the 70S ribosome, L14 and L19 interact and together make contacts with the 16S rRNA in bridges B5 and B8.</text>
</comment>
<comment type="similarity">
    <text evidence="1">Belongs to the universal ribosomal protein uL14 family.</text>
</comment>
<organism>
    <name type="scientific">Methylobacterium sp. (strain 4-46)</name>
    <dbReference type="NCBI Taxonomy" id="426117"/>
    <lineage>
        <taxon>Bacteria</taxon>
        <taxon>Pseudomonadati</taxon>
        <taxon>Pseudomonadota</taxon>
        <taxon>Alphaproteobacteria</taxon>
        <taxon>Hyphomicrobiales</taxon>
        <taxon>Methylobacteriaceae</taxon>
        <taxon>Methylobacterium</taxon>
    </lineage>
</organism>
<protein>
    <recommendedName>
        <fullName evidence="1">Large ribosomal subunit protein uL14</fullName>
    </recommendedName>
    <alternativeName>
        <fullName evidence="2">50S ribosomal protein L14</fullName>
    </alternativeName>
</protein>
<reference key="1">
    <citation type="submission" date="2008-02" db="EMBL/GenBank/DDBJ databases">
        <title>Complete sequence of chromosome of Methylobacterium sp. 4-46.</title>
        <authorList>
            <consortium name="US DOE Joint Genome Institute"/>
            <person name="Copeland A."/>
            <person name="Lucas S."/>
            <person name="Lapidus A."/>
            <person name="Glavina del Rio T."/>
            <person name="Dalin E."/>
            <person name="Tice H."/>
            <person name="Bruce D."/>
            <person name="Goodwin L."/>
            <person name="Pitluck S."/>
            <person name="Chertkov O."/>
            <person name="Brettin T."/>
            <person name="Detter J.C."/>
            <person name="Han C."/>
            <person name="Kuske C.R."/>
            <person name="Schmutz J."/>
            <person name="Larimer F."/>
            <person name="Land M."/>
            <person name="Hauser L."/>
            <person name="Kyrpides N."/>
            <person name="Ivanova N."/>
            <person name="Marx C.J."/>
            <person name="Richardson P."/>
        </authorList>
    </citation>
    <scope>NUCLEOTIDE SEQUENCE [LARGE SCALE GENOMIC DNA]</scope>
    <source>
        <strain>4-46</strain>
    </source>
</reference>